<name>UREF_PSEF5</name>
<gene>
    <name evidence="1" type="primary">ureF</name>
    <name type="ordered locus">PFL_0608</name>
</gene>
<keyword id="KW-0143">Chaperone</keyword>
<keyword id="KW-0963">Cytoplasm</keyword>
<keyword id="KW-0996">Nickel insertion</keyword>
<organism>
    <name type="scientific">Pseudomonas fluorescens (strain ATCC BAA-477 / NRRL B-23932 / Pf-5)</name>
    <dbReference type="NCBI Taxonomy" id="220664"/>
    <lineage>
        <taxon>Bacteria</taxon>
        <taxon>Pseudomonadati</taxon>
        <taxon>Pseudomonadota</taxon>
        <taxon>Gammaproteobacteria</taxon>
        <taxon>Pseudomonadales</taxon>
        <taxon>Pseudomonadaceae</taxon>
        <taxon>Pseudomonas</taxon>
    </lineage>
</organism>
<feature type="chain" id="PRO_1000145135" description="Urease accessory protein UreF">
    <location>
        <begin position="1"/>
        <end position="224"/>
    </location>
</feature>
<protein>
    <recommendedName>
        <fullName evidence="1">Urease accessory protein UreF</fullName>
    </recommendedName>
</protein>
<dbReference type="EMBL" id="CP000076">
    <property type="protein sequence ID" value="AAY96015.1"/>
    <property type="molecule type" value="Genomic_DNA"/>
</dbReference>
<dbReference type="RefSeq" id="WP_011058976.1">
    <property type="nucleotide sequence ID" value="NC_004129.6"/>
</dbReference>
<dbReference type="SMR" id="Q4KJ33"/>
<dbReference type="STRING" id="220664.PFL_0608"/>
<dbReference type="KEGG" id="pfl:PFL_0608"/>
<dbReference type="PATRIC" id="fig|220664.5.peg.624"/>
<dbReference type="eggNOG" id="COG0830">
    <property type="taxonomic scope" value="Bacteria"/>
</dbReference>
<dbReference type="HOGENOM" id="CLU_049215_2_1_6"/>
<dbReference type="Proteomes" id="UP000008540">
    <property type="component" value="Chromosome"/>
</dbReference>
<dbReference type="GO" id="GO:0005737">
    <property type="term" value="C:cytoplasm"/>
    <property type="evidence" value="ECO:0007669"/>
    <property type="project" value="UniProtKB-SubCell"/>
</dbReference>
<dbReference type="GO" id="GO:0016151">
    <property type="term" value="F:nickel cation binding"/>
    <property type="evidence" value="ECO:0007669"/>
    <property type="project" value="UniProtKB-UniRule"/>
</dbReference>
<dbReference type="Gene3D" id="1.10.4190.10">
    <property type="entry name" value="Urease accessory protein UreF"/>
    <property type="match status" value="1"/>
</dbReference>
<dbReference type="HAMAP" id="MF_01385">
    <property type="entry name" value="UreF"/>
    <property type="match status" value="1"/>
</dbReference>
<dbReference type="InterPro" id="IPR002639">
    <property type="entry name" value="UreF"/>
</dbReference>
<dbReference type="InterPro" id="IPR038277">
    <property type="entry name" value="UreF_sf"/>
</dbReference>
<dbReference type="PANTHER" id="PTHR33620">
    <property type="entry name" value="UREASE ACCESSORY PROTEIN F"/>
    <property type="match status" value="1"/>
</dbReference>
<dbReference type="PANTHER" id="PTHR33620:SF1">
    <property type="entry name" value="UREASE ACCESSORY PROTEIN F"/>
    <property type="match status" value="1"/>
</dbReference>
<dbReference type="Pfam" id="PF01730">
    <property type="entry name" value="UreF"/>
    <property type="match status" value="1"/>
</dbReference>
<dbReference type="PIRSF" id="PIRSF009467">
    <property type="entry name" value="Ureas_acces_UreF"/>
    <property type="match status" value="1"/>
</dbReference>
<sequence length="224" mass="25196">MNPAWALLRLASPQLPIGGYSYSQGLEMAVEQQRVNDQASARRWISDQLLLNLARFEAPLLLAHCQAAADQDWARLQQLSEEHRASRETRELYQESRQMGYSLKQLLEGLPELDSDARELLTHQDEPHLALGWALAARAWGISPADALAAWLWSWLENQLAVLMKTLPLGQQAAQRLTSELLPLLQQAQHHAANLDPNHHGSAAFGLSLASMAHERQYSRLFRS</sequence>
<evidence type="ECO:0000255" key="1">
    <source>
        <dbReference type="HAMAP-Rule" id="MF_01385"/>
    </source>
</evidence>
<accession>Q4KJ33</accession>
<comment type="function">
    <text evidence="1">Required for maturation of urease via the functional incorporation of the urease nickel metallocenter.</text>
</comment>
<comment type="subunit">
    <text evidence="1">UreD, UreF and UreG form a complex that acts as a GTP-hydrolysis-dependent molecular chaperone, activating the urease apoprotein by helping to assemble the nickel containing metallocenter of UreC. The UreE protein probably delivers the nickel.</text>
</comment>
<comment type="subcellular location">
    <subcellularLocation>
        <location evidence="1">Cytoplasm</location>
    </subcellularLocation>
</comment>
<comment type="similarity">
    <text evidence="1">Belongs to the UreF family.</text>
</comment>
<proteinExistence type="inferred from homology"/>
<reference key="1">
    <citation type="journal article" date="2005" name="Nat. Biotechnol.">
        <title>Complete genome sequence of the plant commensal Pseudomonas fluorescens Pf-5.</title>
        <authorList>
            <person name="Paulsen I.T."/>
            <person name="Press C.M."/>
            <person name="Ravel J."/>
            <person name="Kobayashi D.Y."/>
            <person name="Myers G.S.A."/>
            <person name="Mavrodi D.V."/>
            <person name="DeBoy R.T."/>
            <person name="Seshadri R."/>
            <person name="Ren Q."/>
            <person name="Madupu R."/>
            <person name="Dodson R.J."/>
            <person name="Durkin A.S."/>
            <person name="Brinkac L.M."/>
            <person name="Daugherty S.C."/>
            <person name="Sullivan S.A."/>
            <person name="Rosovitz M.J."/>
            <person name="Gwinn M.L."/>
            <person name="Zhou L."/>
            <person name="Schneider D.J."/>
            <person name="Cartinhour S.W."/>
            <person name="Nelson W.C."/>
            <person name="Weidman J."/>
            <person name="Watkins K."/>
            <person name="Tran K."/>
            <person name="Khouri H."/>
            <person name="Pierson E.A."/>
            <person name="Pierson L.S. III"/>
            <person name="Thomashow L.S."/>
            <person name="Loper J.E."/>
        </authorList>
    </citation>
    <scope>NUCLEOTIDE SEQUENCE [LARGE SCALE GENOMIC DNA]</scope>
    <source>
        <strain>ATCC BAA-477 / NRRL B-23932 / Pf-5</strain>
    </source>
</reference>